<name>GSTD2_DROME</name>
<proteinExistence type="evidence at protein level"/>
<evidence type="ECO:0000250" key="1"/>
<evidence type="ECO:0000250" key="2">
    <source>
        <dbReference type="UniProtKB" id="P30711"/>
    </source>
</evidence>
<evidence type="ECO:0000269" key="3">
    <source>
    </source>
</evidence>
<evidence type="ECO:0000303" key="4">
    <source>
    </source>
</evidence>
<evidence type="ECO:0000312" key="5">
    <source>
        <dbReference type="FlyBase" id="FBgn0010038"/>
    </source>
</evidence>
<evidence type="ECO:0007829" key="6">
    <source>
        <dbReference type="PDB" id="5F0G"/>
    </source>
</evidence>
<protein>
    <recommendedName>
        <fullName evidence="4">Glutathione S-transferase D2</fullName>
        <ecNumber evidence="3">2.5.1.18</ecNumber>
    </recommendedName>
</protein>
<keyword id="KW-0002">3D-structure</keyword>
<keyword id="KW-0216">Detoxification</keyword>
<keyword id="KW-1185">Reference proteome</keyword>
<keyword id="KW-0808">Transferase</keyword>
<accession>Q9VG98</accession>
<accession>Q9TX91</accession>
<organism>
    <name type="scientific">Drosophila melanogaster</name>
    <name type="common">Fruit fly</name>
    <dbReference type="NCBI Taxonomy" id="7227"/>
    <lineage>
        <taxon>Eukaryota</taxon>
        <taxon>Metazoa</taxon>
        <taxon>Ecdysozoa</taxon>
        <taxon>Arthropoda</taxon>
        <taxon>Hexapoda</taxon>
        <taxon>Insecta</taxon>
        <taxon>Pterygota</taxon>
        <taxon>Neoptera</taxon>
        <taxon>Endopterygota</taxon>
        <taxon>Diptera</taxon>
        <taxon>Brachycera</taxon>
        <taxon>Muscomorpha</taxon>
        <taxon>Ephydroidea</taxon>
        <taxon>Drosophilidae</taxon>
        <taxon>Drosophila</taxon>
        <taxon>Sophophora</taxon>
    </lineage>
</organism>
<sequence length="215" mass="24535">MDFYYMPGGGGCRTVIMVAKALGLELNKKLLNTMEGEQLKPEFVKLNPQHTIPTLVDNGFSIWESRAIAVYLVEKYGKDDYLLPNDPKKRAVINQRLYFDMGTLYESFAKYYYPLFRTGKPGSDEDLKRIETAFGFLDTFLEGQEYVAGDQLTVADIAILSTVSTFEVSEFDFSKYSNVSRWYDNAKKVTPGWDENWEGLMAMKALFDARKLAAK</sequence>
<gene>
    <name evidence="5" type="primary">GstD2</name>
    <name type="synonym">GSTD2-2</name>
    <name evidence="5" type="synonym">gstD21</name>
    <name evidence="5" type="ORF">CG4181</name>
</gene>
<reference key="1">
    <citation type="journal article" date="1993" name="J. Biol. Chem.">
        <title>The glutathione S-transferase D genes. A divergently organized, intronless gene family in Drosophila melanogaster.</title>
        <authorList>
            <person name="Toung Y.-P.S."/>
            <person name="Hsieh T.-S."/>
            <person name="Tu C.-P.D."/>
        </authorList>
    </citation>
    <scope>NUCLEOTIDE SEQUENCE [GENOMIC DNA]</scope>
</reference>
<reference key="2">
    <citation type="journal article" date="2000" name="Science">
        <title>The genome sequence of Drosophila melanogaster.</title>
        <authorList>
            <person name="Adams M.D."/>
            <person name="Celniker S.E."/>
            <person name="Holt R.A."/>
            <person name="Evans C.A."/>
            <person name="Gocayne J.D."/>
            <person name="Amanatides P.G."/>
            <person name="Scherer S.E."/>
            <person name="Li P.W."/>
            <person name="Hoskins R.A."/>
            <person name="Galle R.F."/>
            <person name="George R.A."/>
            <person name="Lewis S.E."/>
            <person name="Richards S."/>
            <person name="Ashburner M."/>
            <person name="Henderson S.N."/>
            <person name="Sutton G.G."/>
            <person name="Wortman J.R."/>
            <person name="Yandell M.D."/>
            <person name="Zhang Q."/>
            <person name="Chen L.X."/>
            <person name="Brandon R.C."/>
            <person name="Rogers Y.-H.C."/>
            <person name="Blazej R.G."/>
            <person name="Champe M."/>
            <person name="Pfeiffer B.D."/>
            <person name="Wan K.H."/>
            <person name="Doyle C."/>
            <person name="Baxter E.G."/>
            <person name="Helt G."/>
            <person name="Nelson C.R."/>
            <person name="Miklos G.L.G."/>
            <person name="Abril J.F."/>
            <person name="Agbayani A."/>
            <person name="An H.-J."/>
            <person name="Andrews-Pfannkoch C."/>
            <person name="Baldwin D."/>
            <person name="Ballew R.M."/>
            <person name="Basu A."/>
            <person name="Baxendale J."/>
            <person name="Bayraktaroglu L."/>
            <person name="Beasley E.M."/>
            <person name="Beeson K.Y."/>
            <person name="Benos P.V."/>
            <person name="Berman B.P."/>
            <person name="Bhandari D."/>
            <person name="Bolshakov S."/>
            <person name="Borkova D."/>
            <person name="Botchan M.R."/>
            <person name="Bouck J."/>
            <person name="Brokstein P."/>
            <person name="Brottier P."/>
            <person name="Burtis K.C."/>
            <person name="Busam D.A."/>
            <person name="Butler H."/>
            <person name="Cadieu E."/>
            <person name="Center A."/>
            <person name="Chandra I."/>
            <person name="Cherry J.M."/>
            <person name="Cawley S."/>
            <person name="Dahlke C."/>
            <person name="Davenport L.B."/>
            <person name="Davies P."/>
            <person name="de Pablos B."/>
            <person name="Delcher A."/>
            <person name="Deng Z."/>
            <person name="Mays A.D."/>
            <person name="Dew I."/>
            <person name="Dietz S.M."/>
            <person name="Dodson K."/>
            <person name="Doup L.E."/>
            <person name="Downes M."/>
            <person name="Dugan-Rocha S."/>
            <person name="Dunkov B.C."/>
            <person name="Dunn P."/>
            <person name="Durbin K.J."/>
            <person name="Evangelista C.C."/>
            <person name="Ferraz C."/>
            <person name="Ferriera S."/>
            <person name="Fleischmann W."/>
            <person name="Fosler C."/>
            <person name="Gabrielian A.E."/>
            <person name="Garg N.S."/>
            <person name="Gelbart W.M."/>
            <person name="Glasser K."/>
            <person name="Glodek A."/>
            <person name="Gong F."/>
            <person name="Gorrell J.H."/>
            <person name="Gu Z."/>
            <person name="Guan P."/>
            <person name="Harris M."/>
            <person name="Harris N.L."/>
            <person name="Harvey D.A."/>
            <person name="Heiman T.J."/>
            <person name="Hernandez J.R."/>
            <person name="Houck J."/>
            <person name="Hostin D."/>
            <person name="Houston K.A."/>
            <person name="Howland T.J."/>
            <person name="Wei M.-H."/>
            <person name="Ibegwam C."/>
            <person name="Jalali M."/>
            <person name="Kalush F."/>
            <person name="Karpen G.H."/>
            <person name="Ke Z."/>
            <person name="Kennison J.A."/>
            <person name="Ketchum K.A."/>
            <person name="Kimmel B.E."/>
            <person name="Kodira C.D."/>
            <person name="Kraft C.L."/>
            <person name="Kravitz S."/>
            <person name="Kulp D."/>
            <person name="Lai Z."/>
            <person name="Lasko P."/>
            <person name="Lei Y."/>
            <person name="Levitsky A.A."/>
            <person name="Li J.H."/>
            <person name="Li Z."/>
            <person name="Liang Y."/>
            <person name="Lin X."/>
            <person name="Liu X."/>
            <person name="Mattei B."/>
            <person name="McIntosh T.C."/>
            <person name="McLeod M.P."/>
            <person name="McPherson D."/>
            <person name="Merkulov G."/>
            <person name="Milshina N.V."/>
            <person name="Mobarry C."/>
            <person name="Morris J."/>
            <person name="Moshrefi A."/>
            <person name="Mount S.M."/>
            <person name="Moy M."/>
            <person name="Murphy B."/>
            <person name="Murphy L."/>
            <person name="Muzny D.M."/>
            <person name="Nelson D.L."/>
            <person name="Nelson D.R."/>
            <person name="Nelson K.A."/>
            <person name="Nixon K."/>
            <person name="Nusskern D.R."/>
            <person name="Pacleb J.M."/>
            <person name="Palazzolo M."/>
            <person name="Pittman G.S."/>
            <person name="Pan S."/>
            <person name="Pollard J."/>
            <person name="Puri V."/>
            <person name="Reese M.G."/>
            <person name="Reinert K."/>
            <person name="Remington K."/>
            <person name="Saunders R.D.C."/>
            <person name="Scheeler F."/>
            <person name="Shen H."/>
            <person name="Shue B.C."/>
            <person name="Siden-Kiamos I."/>
            <person name="Simpson M."/>
            <person name="Skupski M.P."/>
            <person name="Smith T.J."/>
            <person name="Spier E."/>
            <person name="Spradling A.C."/>
            <person name="Stapleton M."/>
            <person name="Strong R."/>
            <person name="Sun E."/>
            <person name="Svirskas R."/>
            <person name="Tector C."/>
            <person name="Turner R."/>
            <person name="Venter E."/>
            <person name="Wang A.H."/>
            <person name="Wang X."/>
            <person name="Wang Z.-Y."/>
            <person name="Wassarman D.A."/>
            <person name="Weinstock G.M."/>
            <person name="Weissenbach J."/>
            <person name="Williams S.M."/>
            <person name="Woodage T."/>
            <person name="Worley K.C."/>
            <person name="Wu D."/>
            <person name="Yang S."/>
            <person name="Yao Q.A."/>
            <person name="Ye J."/>
            <person name="Yeh R.-F."/>
            <person name="Zaveri J.S."/>
            <person name="Zhan M."/>
            <person name="Zhang G."/>
            <person name="Zhao Q."/>
            <person name="Zheng L."/>
            <person name="Zheng X.H."/>
            <person name="Zhong F.N."/>
            <person name="Zhong W."/>
            <person name="Zhou X."/>
            <person name="Zhu S.C."/>
            <person name="Zhu X."/>
            <person name="Smith H.O."/>
            <person name="Gibbs R.A."/>
            <person name="Myers E.W."/>
            <person name="Rubin G.M."/>
            <person name="Venter J.C."/>
        </authorList>
    </citation>
    <scope>NUCLEOTIDE SEQUENCE [LARGE SCALE GENOMIC DNA]</scope>
    <source>
        <strain>Berkeley</strain>
    </source>
</reference>
<reference key="3">
    <citation type="journal article" date="2002" name="Genome Biol.">
        <title>Annotation of the Drosophila melanogaster euchromatic genome: a systematic review.</title>
        <authorList>
            <person name="Misra S."/>
            <person name="Crosby M.A."/>
            <person name="Mungall C.J."/>
            <person name="Matthews B.B."/>
            <person name="Campbell K.S."/>
            <person name="Hradecky P."/>
            <person name="Huang Y."/>
            <person name="Kaminker J.S."/>
            <person name="Millburn G.H."/>
            <person name="Prochnik S.E."/>
            <person name="Smith C.D."/>
            <person name="Tupy J.L."/>
            <person name="Whitfield E.J."/>
            <person name="Bayraktaroglu L."/>
            <person name="Berman B.P."/>
            <person name="Bettencourt B.R."/>
            <person name="Celniker S.E."/>
            <person name="de Grey A.D.N.J."/>
            <person name="Drysdale R.A."/>
            <person name="Harris N.L."/>
            <person name="Richter J."/>
            <person name="Russo S."/>
            <person name="Schroeder A.J."/>
            <person name="Shu S.Q."/>
            <person name="Stapleton M."/>
            <person name="Yamada C."/>
            <person name="Ashburner M."/>
            <person name="Gelbart W.M."/>
            <person name="Rubin G.M."/>
            <person name="Lewis S.E."/>
        </authorList>
    </citation>
    <scope>GENOME REANNOTATION</scope>
    <source>
        <strain>Berkeley</strain>
    </source>
</reference>
<reference key="4">
    <citation type="journal article" date="2012" name="Biochem. J.">
        <title>A preliminary characterization of the cytosolic glutathione transferase proteome from Drosophila melanogaster.</title>
        <authorList>
            <person name="Saisawang C."/>
            <person name="Wongsantichon J."/>
            <person name="Ketterman A.J."/>
        </authorList>
    </citation>
    <scope>FUNCTION</scope>
    <scope>CATALYTIC ACTIVITY</scope>
    <scope>BIOPHYSICOCHEMICAL PROPERTIES</scope>
</reference>
<feature type="chain" id="PRO_0000185954" description="Glutathione S-transferase D2">
    <location>
        <begin position="1"/>
        <end position="215"/>
    </location>
</feature>
<feature type="domain" description="GST N-terminal">
    <location>
        <begin position="1"/>
        <end position="80"/>
    </location>
</feature>
<feature type="domain" description="GST C-terminal">
    <location>
        <begin position="86"/>
        <end position="212"/>
    </location>
</feature>
<feature type="binding site" evidence="1">
    <location>
        <begin position="50"/>
        <end position="52"/>
    </location>
    <ligand>
        <name>glutathione</name>
        <dbReference type="ChEBI" id="CHEBI:57925"/>
    </ligand>
</feature>
<feature type="binding site" evidence="1">
    <location>
        <begin position="64"/>
        <end position="66"/>
    </location>
    <ligand>
        <name>glutathione</name>
        <dbReference type="ChEBI" id="CHEBI:57925"/>
    </ligand>
</feature>
<feature type="strand" evidence="6">
    <location>
        <begin position="2"/>
        <end position="5"/>
    </location>
</feature>
<feature type="helix" evidence="6">
    <location>
        <begin position="10"/>
        <end position="21"/>
    </location>
</feature>
<feature type="strand" evidence="6">
    <location>
        <begin position="27"/>
        <end position="30"/>
    </location>
</feature>
<feature type="helix" evidence="6">
    <location>
        <begin position="33"/>
        <end position="35"/>
    </location>
</feature>
<feature type="helix" evidence="6">
    <location>
        <begin position="37"/>
        <end position="39"/>
    </location>
</feature>
<feature type="helix" evidence="6">
    <location>
        <begin position="41"/>
        <end position="46"/>
    </location>
</feature>
<feature type="strand" evidence="6">
    <location>
        <begin position="52"/>
        <end position="57"/>
    </location>
</feature>
<feature type="strand" evidence="6">
    <location>
        <begin position="60"/>
        <end position="64"/>
    </location>
</feature>
<feature type="helix" evidence="6">
    <location>
        <begin position="65"/>
        <end position="76"/>
    </location>
</feature>
<feature type="turn" evidence="6">
    <location>
        <begin position="79"/>
        <end position="81"/>
    </location>
</feature>
<feature type="helix" evidence="6">
    <location>
        <begin position="87"/>
        <end position="102"/>
    </location>
</feature>
<feature type="helix" evidence="6">
    <location>
        <begin position="104"/>
        <end position="112"/>
    </location>
</feature>
<feature type="helix" evidence="6">
    <location>
        <begin position="124"/>
        <end position="140"/>
    </location>
</feature>
<feature type="turn" evidence="6">
    <location>
        <begin position="141"/>
        <end position="143"/>
    </location>
</feature>
<feature type="strand" evidence="6">
    <location>
        <begin position="149"/>
        <end position="151"/>
    </location>
</feature>
<feature type="helix" evidence="6">
    <location>
        <begin position="154"/>
        <end position="168"/>
    </location>
</feature>
<feature type="helix" evidence="6">
    <location>
        <begin position="177"/>
        <end position="189"/>
    </location>
</feature>
<feature type="helix" evidence="6">
    <location>
        <begin position="193"/>
        <end position="211"/>
    </location>
</feature>
<dbReference type="EC" id="2.5.1.18" evidence="3"/>
<dbReference type="EMBL" id="M97702">
    <property type="status" value="NOT_ANNOTATED_CDS"/>
    <property type="molecule type" value="Genomic_DNA"/>
</dbReference>
<dbReference type="EMBL" id="AE014297">
    <property type="protein sequence ID" value="AAF54787.1"/>
    <property type="molecule type" value="Genomic_DNA"/>
</dbReference>
<dbReference type="PIR" id="D46681">
    <property type="entry name" value="D46681"/>
</dbReference>
<dbReference type="RefSeq" id="NP_524912.1">
    <property type="nucleotide sequence ID" value="NM_080173.2"/>
</dbReference>
<dbReference type="PDB" id="5F0G">
    <property type="method" value="X-ray"/>
    <property type="resolution" value="1.60 A"/>
    <property type="chains" value="A/B=1-215"/>
</dbReference>
<dbReference type="PDBsum" id="5F0G"/>
<dbReference type="SMR" id="Q9VG98"/>
<dbReference type="BioGRID" id="71332">
    <property type="interactions" value="9"/>
</dbReference>
<dbReference type="FunCoup" id="Q9VG98">
    <property type="interactions" value="197"/>
</dbReference>
<dbReference type="IntAct" id="Q9VG98">
    <property type="interactions" value="5"/>
</dbReference>
<dbReference type="STRING" id="7227.FBpp0082041"/>
<dbReference type="PaxDb" id="7227-FBpp0082041"/>
<dbReference type="DNASU" id="48335"/>
<dbReference type="EnsemblMetazoa" id="FBtr0082569">
    <property type="protein sequence ID" value="FBpp0082041"/>
    <property type="gene ID" value="FBgn0010038"/>
</dbReference>
<dbReference type="GeneID" id="48335"/>
<dbReference type="KEGG" id="dme:Dmel_CG4181"/>
<dbReference type="AGR" id="FB:FBgn0010038"/>
<dbReference type="CTD" id="48335"/>
<dbReference type="FlyBase" id="FBgn0010038">
    <property type="gene designation" value="GstD2"/>
</dbReference>
<dbReference type="VEuPathDB" id="VectorBase:FBgn0010038"/>
<dbReference type="eggNOG" id="KOG0867">
    <property type="taxonomic scope" value="Eukaryota"/>
</dbReference>
<dbReference type="GeneTree" id="ENSGT00940000164816"/>
<dbReference type="HOGENOM" id="CLU_011226_2_1_1"/>
<dbReference type="InParanoid" id="Q9VG98"/>
<dbReference type="OMA" id="HENNDFI"/>
<dbReference type="OrthoDB" id="2309723at2759"/>
<dbReference type="PhylomeDB" id="Q9VG98"/>
<dbReference type="BRENDA" id="2.5.1.18">
    <property type="organism ID" value="1994"/>
</dbReference>
<dbReference type="SABIO-RK" id="Q9VG98"/>
<dbReference type="BioGRID-ORCS" id="48335">
    <property type="hits" value="0 hits in 1 CRISPR screen"/>
</dbReference>
<dbReference type="ChiTaRS" id="GstS1">
    <property type="organism name" value="fly"/>
</dbReference>
<dbReference type="GenomeRNAi" id="48335"/>
<dbReference type="PRO" id="PR:Q9VG98"/>
<dbReference type="Proteomes" id="UP000000803">
    <property type="component" value="Chromosome 3R"/>
</dbReference>
<dbReference type="Bgee" id="FBgn0010038">
    <property type="expression patterns" value="Expressed in adult anterior midgut class II enteroendocrine cell in adult midgut (Drosophila) and 68 other cell types or tissues"/>
</dbReference>
<dbReference type="ExpressionAtlas" id="Q9VG98">
    <property type="expression patterns" value="baseline and differential"/>
</dbReference>
<dbReference type="GO" id="GO:0005737">
    <property type="term" value="C:cytoplasm"/>
    <property type="evidence" value="ECO:0000250"/>
    <property type="project" value="FlyBase"/>
</dbReference>
<dbReference type="GO" id="GO:0004602">
    <property type="term" value="F:glutathione peroxidase activity"/>
    <property type="evidence" value="ECO:0000314"/>
    <property type="project" value="FlyBase"/>
</dbReference>
<dbReference type="GO" id="GO:0004364">
    <property type="term" value="F:glutathione transferase activity"/>
    <property type="evidence" value="ECO:0000314"/>
    <property type="project" value="FlyBase"/>
</dbReference>
<dbReference type="GO" id="GO:0006749">
    <property type="term" value="P:glutathione metabolic process"/>
    <property type="evidence" value="ECO:0000314"/>
    <property type="project" value="FlyBase"/>
</dbReference>
<dbReference type="CDD" id="cd03177">
    <property type="entry name" value="GST_C_Delta_Epsilon"/>
    <property type="match status" value="1"/>
</dbReference>
<dbReference type="CDD" id="cd03045">
    <property type="entry name" value="GST_N_Delta_Epsilon"/>
    <property type="match status" value="1"/>
</dbReference>
<dbReference type="FunFam" id="3.40.30.10:FF:000034">
    <property type="entry name" value="glutathione S-transferase 1"/>
    <property type="match status" value="1"/>
</dbReference>
<dbReference type="FunFam" id="1.20.1050.10:FF:000007">
    <property type="entry name" value="Glutathione S-transferase 1-1"/>
    <property type="match status" value="1"/>
</dbReference>
<dbReference type="Gene3D" id="1.20.1050.10">
    <property type="match status" value="1"/>
</dbReference>
<dbReference type="Gene3D" id="3.40.30.10">
    <property type="entry name" value="Glutaredoxin"/>
    <property type="match status" value="1"/>
</dbReference>
<dbReference type="InterPro" id="IPR010987">
    <property type="entry name" value="Glutathione-S-Trfase_C-like"/>
</dbReference>
<dbReference type="InterPro" id="IPR036282">
    <property type="entry name" value="Glutathione-S-Trfase_C_sf"/>
</dbReference>
<dbReference type="InterPro" id="IPR040079">
    <property type="entry name" value="Glutathione_S-Trfase"/>
</dbReference>
<dbReference type="InterPro" id="IPR004045">
    <property type="entry name" value="Glutathione_S-Trfase_N"/>
</dbReference>
<dbReference type="InterPro" id="IPR004046">
    <property type="entry name" value="GST_C"/>
</dbReference>
<dbReference type="InterPro" id="IPR036249">
    <property type="entry name" value="Thioredoxin-like_sf"/>
</dbReference>
<dbReference type="PANTHER" id="PTHR43969">
    <property type="entry name" value="GLUTATHIONE S TRANSFERASE D10, ISOFORM A-RELATED"/>
    <property type="match status" value="1"/>
</dbReference>
<dbReference type="PANTHER" id="PTHR43969:SF9">
    <property type="entry name" value="GLUTATHIONE S TRANSFERASE D10, ISOFORM A-RELATED"/>
    <property type="match status" value="1"/>
</dbReference>
<dbReference type="Pfam" id="PF00043">
    <property type="entry name" value="GST_C"/>
    <property type="match status" value="1"/>
</dbReference>
<dbReference type="Pfam" id="PF02798">
    <property type="entry name" value="GST_N"/>
    <property type="match status" value="1"/>
</dbReference>
<dbReference type="SFLD" id="SFLDS00019">
    <property type="entry name" value="Glutathione_Transferase_(cytos"/>
    <property type="match status" value="1"/>
</dbReference>
<dbReference type="SFLD" id="SFLDG00358">
    <property type="entry name" value="Main_(cytGST)"/>
    <property type="match status" value="1"/>
</dbReference>
<dbReference type="SUPFAM" id="SSF47616">
    <property type="entry name" value="GST C-terminal domain-like"/>
    <property type="match status" value="1"/>
</dbReference>
<dbReference type="SUPFAM" id="SSF52833">
    <property type="entry name" value="Thioredoxin-like"/>
    <property type="match status" value="1"/>
</dbReference>
<dbReference type="PROSITE" id="PS50405">
    <property type="entry name" value="GST_CTER"/>
    <property type="match status" value="1"/>
</dbReference>
<dbReference type="PROSITE" id="PS50404">
    <property type="entry name" value="GST_NTER"/>
    <property type="match status" value="1"/>
</dbReference>
<comment type="function">
    <text evidence="3">Conjugation of reduced glutathione to a wide number of exogenous and endogenous hydrophobic electrophiles (PubMed:22082028). May be involved in detoxification (PubMed:22082028).</text>
</comment>
<comment type="catalytic activity">
    <reaction evidence="3">
        <text>RX + glutathione = an S-substituted glutathione + a halide anion + H(+)</text>
        <dbReference type="Rhea" id="RHEA:16437"/>
        <dbReference type="ChEBI" id="CHEBI:15378"/>
        <dbReference type="ChEBI" id="CHEBI:16042"/>
        <dbReference type="ChEBI" id="CHEBI:17792"/>
        <dbReference type="ChEBI" id="CHEBI:57925"/>
        <dbReference type="ChEBI" id="CHEBI:90779"/>
        <dbReference type="EC" id="2.5.1.18"/>
    </reaction>
</comment>
<comment type="biophysicochemical properties">
    <kinetics>
        <KM evidence="3">1.84 mM for glutathione</KM>
        <KM evidence="3">0.81 mM for 1-chloro-2,4-dinitrobenzene</KM>
        <Vmax evidence="3">0.53 umol/min/mg enzyme with 1-chloro-2,4-dinitrobenzene as substrate</Vmax>
        <Vmax evidence="3">0.5 umol/min/mg enzyme with 4-hydroxy-2-nonenal as substrate</Vmax>
        <Vmax evidence="3">0.013 umol/min/mg enzyme with phenethyl isothiocyanate as substrate</Vmax>
    </kinetics>
</comment>
<comment type="subunit">
    <text evidence="2">Homodimer.</text>
</comment>
<comment type="interaction">
    <interactant intactId="EBI-15126376">
        <id>Q9VG98</id>
    </interactant>
    <interactant intactId="EBI-15116229">
        <id>Q9VG92</id>
        <label>GstD8</label>
    </interactant>
    <organismsDiffer>false</organismsDiffer>
    <experiments>4</experiments>
</comment>
<comment type="similarity">
    <text evidence="4">Belongs to the GST superfamily. Delta family.</text>
</comment>